<accession>Q9RQP6</accession>
<accession>Q2FUU6</accession>
<sequence length="350" mass="41344">MKKIRLELVYLRAIICAIIIITHLLTQITLKHENMEGGSLVLQFYIRNIVIFGTPCFIILSQLLTTLNYQKVTYRYLTTRVKYILIPYILMGLFYSYSESLLTDSSFNKQFIENVLLGQWYGYFIVVIMQFFILSYIIFKINYNLFNSKILLLLSFILQQSFLYYFTNNTAFHDTVLHYYPLSENTIIFGWIFYFFLGAYMGYNYERVLNFLERYLVIMIVLAVATYFVFIALANGDYWNVTSFSYSLTPYNSIMFIVILGICTHFKTMLFNTIQMISAFSFFIYLLHPIILDSLFAYTNIFEDNTMVFLAISLLFILGLCIGVGMILREFYIFRFIIGKQPYKLNINAY</sequence>
<name>ICAC_STAA8</name>
<gene>
    <name type="primary">icaC</name>
    <name type="ordered locus">SAOUHSC_03005</name>
</gene>
<comment type="function">
    <text evidence="1">Presumably involved in the export of the biofilm adhesin polysaccharide poly-beta-1,6-N-acetyl-D-glucosamine (PNAG, also referred to as PIA) across the cell membrane.</text>
</comment>
<comment type="subcellular location">
    <subcellularLocation>
        <location evidence="4">Cell membrane</location>
        <topology evidence="4">Multi-pass membrane protein</topology>
    </subcellularLocation>
</comment>
<comment type="disruption phenotype">
    <text evidence="3">Deletion of the icaADBCR genes leads to the inability to form biofilms, produce PIA or mediate N-acetylglucosaminyltransferase activity in vitro.</text>
</comment>
<comment type="similarity">
    <text evidence="4">Belongs to the acyltransferase 3 family.</text>
</comment>
<dbReference type="EMBL" id="AF086783">
    <property type="protein sequence ID" value="AAD52058.1"/>
    <property type="molecule type" value="Genomic_DNA"/>
</dbReference>
<dbReference type="EMBL" id="CP000253">
    <property type="protein sequence ID" value="ABD31992.1"/>
    <property type="molecule type" value="Genomic_DNA"/>
</dbReference>
<dbReference type="PIR" id="E90075">
    <property type="entry name" value="E90075"/>
</dbReference>
<dbReference type="RefSeq" id="WP_000723836.1">
    <property type="nucleotide sequence ID" value="NZ_LS483365.1"/>
</dbReference>
<dbReference type="RefSeq" id="YP_501454.1">
    <property type="nucleotide sequence ID" value="NC_007795.1"/>
</dbReference>
<dbReference type="STRING" id="93061.SAOUHSC_03005"/>
<dbReference type="PaxDb" id="1280-SAXN108_2941"/>
<dbReference type="GeneID" id="3921487"/>
<dbReference type="KEGG" id="sao:SAOUHSC_03005"/>
<dbReference type="PATRIC" id="fig|93061.5.peg.2712"/>
<dbReference type="eggNOG" id="COG3936">
    <property type="taxonomic scope" value="Bacteria"/>
</dbReference>
<dbReference type="HOGENOM" id="CLU_064947_1_0_9"/>
<dbReference type="OrthoDB" id="65129at2"/>
<dbReference type="PHI-base" id="PHI:9885"/>
<dbReference type="PRO" id="PR:Q9RQP6"/>
<dbReference type="Proteomes" id="UP000008816">
    <property type="component" value="Chromosome"/>
</dbReference>
<dbReference type="GO" id="GO:0005886">
    <property type="term" value="C:plasma membrane"/>
    <property type="evidence" value="ECO:0000318"/>
    <property type="project" value="GO_Central"/>
</dbReference>
<dbReference type="GO" id="GO:0016413">
    <property type="term" value="F:O-acetyltransferase activity"/>
    <property type="evidence" value="ECO:0000318"/>
    <property type="project" value="GO_Central"/>
</dbReference>
<dbReference type="GO" id="GO:0009246">
    <property type="term" value="P:enterobacterial common antigen biosynthetic process"/>
    <property type="evidence" value="ECO:0000318"/>
    <property type="project" value="GO_Central"/>
</dbReference>
<dbReference type="InterPro" id="IPR002656">
    <property type="entry name" value="Acyl_transf_3_dom"/>
</dbReference>
<dbReference type="PANTHER" id="PTHR40074">
    <property type="entry name" value="O-ACETYLTRANSFERASE WECH"/>
    <property type="match status" value="1"/>
</dbReference>
<dbReference type="PANTHER" id="PTHR40074:SF2">
    <property type="entry name" value="O-ACETYLTRANSFERASE WECH"/>
    <property type="match status" value="1"/>
</dbReference>
<dbReference type="Pfam" id="PF01757">
    <property type="entry name" value="Acyl_transf_3"/>
    <property type="match status" value="1"/>
</dbReference>
<evidence type="ECO:0000250" key="1"/>
<evidence type="ECO:0000255" key="2"/>
<evidence type="ECO:0000269" key="3">
    <source>
    </source>
</evidence>
<evidence type="ECO:0000305" key="4"/>
<feature type="chain" id="PRO_0000208076" description="Probable poly-beta-1,6-N-acetyl-D-glucosamine export protein">
    <location>
        <begin position="1"/>
        <end position="350"/>
    </location>
</feature>
<feature type="transmembrane region" description="Helical" evidence="2">
    <location>
        <begin position="8"/>
        <end position="28"/>
    </location>
</feature>
<feature type="transmembrane region" description="Helical" evidence="2">
    <location>
        <begin position="40"/>
        <end position="60"/>
    </location>
</feature>
<feature type="transmembrane region" description="Helical" evidence="2">
    <location>
        <begin position="83"/>
        <end position="103"/>
    </location>
</feature>
<feature type="transmembrane region" description="Helical" evidence="2">
    <location>
        <begin position="119"/>
        <end position="139"/>
    </location>
</feature>
<feature type="transmembrane region" description="Helical" evidence="2">
    <location>
        <begin position="146"/>
        <end position="166"/>
    </location>
</feature>
<feature type="transmembrane region" description="Helical" evidence="2">
    <location>
        <begin position="182"/>
        <end position="202"/>
    </location>
</feature>
<feature type="transmembrane region" description="Helical" evidence="2">
    <location>
        <begin position="216"/>
        <end position="236"/>
    </location>
</feature>
<feature type="transmembrane region" description="Helical" evidence="2">
    <location>
        <begin position="254"/>
        <end position="274"/>
    </location>
</feature>
<feature type="transmembrane region" description="Helical" evidence="2">
    <location>
        <begin position="276"/>
        <end position="296"/>
    </location>
</feature>
<feature type="transmembrane region" description="Helical" evidence="2">
    <location>
        <begin position="308"/>
        <end position="328"/>
    </location>
</feature>
<reference key="1">
    <citation type="journal article" date="1999" name="Infect. Immun.">
        <title>The intercellular adhesion (ica) locus is present in Staphylococcus aureus and is required for biofilm formation.</title>
        <authorList>
            <person name="Cramton S.E."/>
            <person name="Gerke C."/>
            <person name="Schnell N.F."/>
            <person name="Nichols W.W."/>
            <person name="Goetz F."/>
        </authorList>
    </citation>
    <scope>NUCLEOTIDE SEQUENCE [GENOMIC DNA]</scope>
    <scope>ROLE IN BIOFILM FORMATION</scope>
    <scope>DISRUPTION PHENOTYPE</scope>
</reference>
<reference key="2">
    <citation type="book" date="2006" name="Gram positive pathogens, 2nd edition">
        <title>The Staphylococcus aureus NCTC 8325 genome.</title>
        <editorList>
            <person name="Fischetti V."/>
            <person name="Novick R."/>
            <person name="Ferretti J."/>
            <person name="Portnoy D."/>
            <person name="Rood J."/>
        </editorList>
        <authorList>
            <person name="Gillaspy A.F."/>
            <person name="Worrell V."/>
            <person name="Orvis J."/>
            <person name="Roe B.A."/>
            <person name="Dyer D.W."/>
            <person name="Iandolo J.J."/>
        </authorList>
    </citation>
    <scope>NUCLEOTIDE SEQUENCE [LARGE SCALE GENOMIC DNA]</scope>
    <source>
        <strain>NCTC 8325 / PS 47</strain>
    </source>
</reference>
<protein>
    <recommendedName>
        <fullName>Probable poly-beta-1,6-N-acetyl-D-glucosamine export protein</fullName>
        <shortName>PGA export protein</shortName>
        <shortName>Poly-beta-1,6-GlcNAc export protein</shortName>
    </recommendedName>
    <alternativeName>
        <fullName>Biofilm polysaccharide intercellular adhesin export protein</fullName>
        <shortName>Biofilm PIA export protein</shortName>
    </alternativeName>
    <alternativeName>
        <fullName>Intercellular adhesion protein C</fullName>
    </alternativeName>
</protein>
<proteinExistence type="inferred from homology"/>
<organism>
    <name type="scientific">Staphylococcus aureus (strain NCTC 8325 / PS 47)</name>
    <dbReference type="NCBI Taxonomy" id="93061"/>
    <lineage>
        <taxon>Bacteria</taxon>
        <taxon>Bacillati</taxon>
        <taxon>Bacillota</taxon>
        <taxon>Bacilli</taxon>
        <taxon>Bacillales</taxon>
        <taxon>Staphylococcaceae</taxon>
        <taxon>Staphylococcus</taxon>
    </lineage>
</organism>
<keyword id="KW-1003">Cell membrane</keyword>
<keyword id="KW-0472">Membrane</keyword>
<keyword id="KW-1185">Reference proteome</keyword>
<keyword id="KW-0812">Transmembrane</keyword>
<keyword id="KW-1133">Transmembrane helix</keyword>
<keyword id="KW-0813">Transport</keyword>